<dbReference type="EC" id="1.3.1.-" evidence="4"/>
<dbReference type="EMBL" id="AAHF01000007">
    <property type="protein sequence ID" value="EAL88283.1"/>
    <property type="molecule type" value="Genomic_DNA"/>
</dbReference>
<dbReference type="RefSeq" id="XP_750321.1">
    <property type="nucleotide sequence ID" value="XM_745228.1"/>
</dbReference>
<dbReference type="SMR" id="Q4WJJ9"/>
<dbReference type="FunCoup" id="Q4WJJ9">
    <property type="interactions" value="488"/>
</dbReference>
<dbReference type="STRING" id="330879.Q4WJJ9"/>
<dbReference type="GlyCosmos" id="Q4WJJ9">
    <property type="glycosylation" value="1 site, No reported glycans"/>
</dbReference>
<dbReference type="EnsemblFungi" id="EAL88283">
    <property type="protein sequence ID" value="EAL88283"/>
    <property type="gene ID" value="AFUA_1G05720"/>
</dbReference>
<dbReference type="GeneID" id="3507579"/>
<dbReference type="KEGG" id="afm:AFUA_1G05720"/>
<dbReference type="eggNOG" id="KOG1435">
    <property type="taxonomic scope" value="Eukaryota"/>
</dbReference>
<dbReference type="HOGENOM" id="CLU_015631_0_3_1"/>
<dbReference type="InParanoid" id="Q4WJJ9"/>
<dbReference type="OMA" id="EWCELRP"/>
<dbReference type="OrthoDB" id="10262235at2759"/>
<dbReference type="UniPathway" id="UPA00768"/>
<dbReference type="Proteomes" id="UP000002530">
    <property type="component" value="Chromosome 1"/>
</dbReference>
<dbReference type="GO" id="GO:0005789">
    <property type="term" value="C:endoplasmic reticulum membrane"/>
    <property type="evidence" value="ECO:0000318"/>
    <property type="project" value="GO_Central"/>
</dbReference>
<dbReference type="GO" id="GO:0050613">
    <property type="term" value="F:Delta14-sterol reductase activity"/>
    <property type="evidence" value="ECO:0000318"/>
    <property type="project" value="GO_Central"/>
</dbReference>
<dbReference type="GO" id="GO:0006696">
    <property type="term" value="P:ergosterol biosynthetic process"/>
    <property type="evidence" value="ECO:0000318"/>
    <property type="project" value="GO_Central"/>
</dbReference>
<dbReference type="FunFam" id="1.20.120.1630:FF:000008">
    <property type="entry name" value="C-14 sterol reductase"/>
    <property type="match status" value="1"/>
</dbReference>
<dbReference type="Gene3D" id="1.20.120.1630">
    <property type="match status" value="1"/>
</dbReference>
<dbReference type="InterPro" id="IPR001171">
    <property type="entry name" value="ERG24_DHCR-like"/>
</dbReference>
<dbReference type="InterPro" id="IPR018083">
    <property type="entry name" value="Sterol_reductase_CS"/>
</dbReference>
<dbReference type="PANTHER" id="PTHR21257">
    <property type="entry name" value="DELTA(14)-STEROL REDUCTASE"/>
    <property type="match status" value="1"/>
</dbReference>
<dbReference type="PANTHER" id="PTHR21257:SF52">
    <property type="entry name" value="DELTA(14)-STEROL REDUCTASE TM7SF2"/>
    <property type="match status" value="1"/>
</dbReference>
<dbReference type="Pfam" id="PF01222">
    <property type="entry name" value="ERG4_ERG24"/>
    <property type="match status" value="1"/>
</dbReference>
<dbReference type="PROSITE" id="PS01017">
    <property type="entry name" value="STEROL_REDUCT_1"/>
    <property type="match status" value="1"/>
</dbReference>
<dbReference type="PROSITE" id="PS01018">
    <property type="entry name" value="STEROL_REDUCT_2"/>
    <property type="match status" value="1"/>
</dbReference>
<sequence length="518" mass="58949">MKLRNTGQMAFRSPFSNLHVRRSSHKPSHPAFVRQNRSMHYYFRDALNIGAFGIIFGLPCLLYAFTFFCNDISGCPAPSLLHPSTLSIDKLEQEVGWPEDGIKALYDTQVTMWVLSYYLLSLLMQVFLPGTEVEGTELACGGRLKYKFNAFLSAVLILSGCAVGTYLYGTEFALWTFLWDNYVQVITANLIICTAIAIFVYLRSFSVPAPGQLNPELRQLAPGGHTGNVLYDFFIGRELNPRIKLPIPFVGETARTIDIKVWCEMRPGLLGWIILDLSNIAHQYRTYGYITDSIVLTTAFQAFYVLDALYMEPALLTTMDVIMDGFGFMLSFGDMVWVPFLYNFQTRYLSVYPSELGLSGILIVLAVTAAGYVIFRGANNQKNRFRTDPNDPRVKHLKYIETKTGSKLLISGWWGCARHINYLGDWIMSWSYCLPTGVAGYAIIESINPASGEMQKQAVQTPESRGWGMIFTYFYMIYFGVLLLHRERRDEEKCKRKYGADWNRYTSLVRSRIIPGIY</sequence>
<accession>Q4WJJ9</accession>
<organism>
    <name type="scientific">Aspergillus fumigatus (strain ATCC MYA-4609 / CBS 101355 / FGSC A1100 / Af293)</name>
    <name type="common">Neosartorya fumigata</name>
    <dbReference type="NCBI Taxonomy" id="330879"/>
    <lineage>
        <taxon>Eukaryota</taxon>
        <taxon>Fungi</taxon>
        <taxon>Dikarya</taxon>
        <taxon>Ascomycota</taxon>
        <taxon>Pezizomycotina</taxon>
        <taxon>Eurotiomycetes</taxon>
        <taxon>Eurotiomycetidae</taxon>
        <taxon>Eurotiales</taxon>
        <taxon>Aspergillaceae</taxon>
        <taxon>Aspergillus</taxon>
        <taxon>Aspergillus subgen. Fumigati</taxon>
    </lineage>
</organism>
<protein>
    <recommendedName>
        <fullName evidence="5">Delta(14)-sterol reductase erg24B</fullName>
        <ecNumber evidence="4">1.3.1.-</ecNumber>
    </recommendedName>
    <alternativeName>
        <fullName evidence="5">C-14 sterol reductase erg24B</fullName>
    </alternativeName>
    <alternativeName>
        <fullName evidence="5">Ergosterol biosynthesis protein 24B</fullName>
    </alternativeName>
    <alternativeName>
        <fullName evidence="5">Sterol C14-reductase erg24B</fullName>
    </alternativeName>
</protein>
<gene>
    <name evidence="5" type="primary">erg24B</name>
    <name type="ORF">AFUA_1G05720</name>
</gene>
<reference key="1">
    <citation type="journal article" date="2005" name="Nature">
        <title>Genomic sequence of the pathogenic and allergenic filamentous fungus Aspergillus fumigatus.</title>
        <authorList>
            <person name="Nierman W.C."/>
            <person name="Pain A."/>
            <person name="Anderson M.J."/>
            <person name="Wortman J.R."/>
            <person name="Kim H.S."/>
            <person name="Arroyo J."/>
            <person name="Berriman M."/>
            <person name="Abe K."/>
            <person name="Archer D.B."/>
            <person name="Bermejo C."/>
            <person name="Bennett J.W."/>
            <person name="Bowyer P."/>
            <person name="Chen D."/>
            <person name="Collins M."/>
            <person name="Coulsen R."/>
            <person name="Davies R."/>
            <person name="Dyer P.S."/>
            <person name="Farman M.L."/>
            <person name="Fedorova N."/>
            <person name="Fedorova N.D."/>
            <person name="Feldblyum T.V."/>
            <person name="Fischer R."/>
            <person name="Fosker N."/>
            <person name="Fraser A."/>
            <person name="Garcia J.L."/>
            <person name="Garcia M.J."/>
            <person name="Goble A."/>
            <person name="Goldman G.H."/>
            <person name="Gomi K."/>
            <person name="Griffith-Jones S."/>
            <person name="Gwilliam R."/>
            <person name="Haas B.J."/>
            <person name="Haas H."/>
            <person name="Harris D.E."/>
            <person name="Horiuchi H."/>
            <person name="Huang J."/>
            <person name="Humphray S."/>
            <person name="Jimenez J."/>
            <person name="Keller N."/>
            <person name="Khouri H."/>
            <person name="Kitamoto K."/>
            <person name="Kobayashi T."/>
            <person name="Konzack S."/>
            <person name="Kulkarni R."/>
            <person name="Kumagai T."/>
            <person name="Lafton A."/>
            <person name="Latge J.-P."/>
            <person name="Li W."/>
            <person name="Lord A."/>
            <person name="Lu C."/>
            <person name="Majoros W.H."/>
            <person name="May G.S."/>
            <person name="Miller B.L."/>
            <person name="Mohamoud Y."/>
            <person name="Molina M."/>
            <person name="Monod M."/>
            <person name="Mouyna I."/>
            <person name="Mulligan S."/>
            <person name="Murphy L.D."/>
            <person name="O'Neil S."/>
            <person name="Paulsen I."/>
            <person name="Penalva M.A."/>
            <person name="Pertea M."/>
            <person name="Price C."/>
            <person name="Pritchard B.L."/>
            <person name="Quail M.A."/>
            <person name="Rabbinowitsch E."/>
            <person name="Rawlins N."/>
            <person name="Rajandream M.A."/>
            <person name="Reichard U."/>
            <person name="Renauld H."/>
            <person name="Robson G.D."/>
            <person name="Rodriguez de Cordoba S."/>
            <person name="Rodriguez-Pena J.M."/>
            <person name="Ronning C.M."/>
            <person name="Rutter S."/>
            <person name="Salzberg S.L."/>
            <person name="Sanchez M."/>
            <person name="Sanchez-Ferrero J.C."/>
            <person name="Saunders D."/>
            <person name="Seeger K."/>
            <person name="Squares R."/>
            <person name="Squares S."/>
            <person name="Takeuchi M."/>
            <person name="Tekaia F."/>
            <person name="Turner G."/>
            <person name="Vazquez de Aldana C.R."/>
            <person name="Weidman J."/>
            <person name="White O."/>
            <person name="Woodward J.R."/>
            <person name="Yu J.-H."/>
            <person name="Fraser C.M."/>
            <person name="Galagan J.E."/>
            <person name="Asai K."/>
            <person name="Machida M."/>
            <person name="Hall N."/>
            <person name="Barrell B.G."/>
            <person name="Denning D.W."/>
        </authorList>
    </citation>
    <scope>NUCLEOTIDE SEQUENCE [LARGE SCALE GENOMIC DNA]</scope>
    <source>
        <strain>ATCC MYA-4609 / CBS 101355 / FGSC A1100 / Af293</strain>
    </source>
</reference>
<reference key="2">
    <citation type="journal article" date="2005" name="Med. Mycol.">
        <title>The ergosterol biosynthesis pathway, transporter genes, and azole resistance in Aspergillus fumigatus.</title>
        <authorList>
            <person name="Ferreira M.E."/>
            <person name="Colombo A.L."/>
            <person name="Paulsen I."/>
            <person name="Ren Q."/>
            <person name="Wortman J."/>
            <person name="Huang J."/>
            <person name="Goldman M.H."/>
            <person name="Goldman G.H."/>
        </authorList>
    </citation>
    <scope>IDENTIFICATION</scope>
    <scope>FUNCTION</scope>
    <scope>PATHWAY</scope>
</reference>
<reference key="3">
    <citation type="journal article" date="2008" name="Steroids">
        <title>Ergosterol biosynthesis pathway in Aspergillus fumigatus.</title>
        <authorList>
            <person name="Alcazar-Fuoli L."/>
            <person name="Mellado E."/>
            <person name="Garcia-Effron G."/>
            <person name="Lopez J.F."/>
            <person name="Grimalt J.O."/>
            <person name="Cuenca-Estrella J.M."/>
            <person name="Rodriguez-Tudela J.L."/>
        </authorList>
    </citation>
    <scope>FUNCTION</scope>
</reference>
<reference key="4">
    <citation type="journal article" date="2021" name="Appl. Microbiol. Biotechnol.">
        <title>The sterol C-14 reductase Erg24 is responsible for ergosterol biosynthesis and ion homeostasis in Aspergillus fumigatus.</title>
        <authorList>
            <person name="Li Y."/>
            <person name="Dai M."/>
            <person name="Zhang Y."/>
            <person name="Lu L."/>
        </authorList>
    </citation>
    <scope>FUNCTION</scope>
    <scope>DISRUPTION PHENOTYPE</scope>
    <scope>CATALYTIC ACTIVITY</scope>
    <scope>SUBCELLULAR LOCATION</scope>
    <scope>PATHWAY</scope>
</reference>
<keyword id="KW-0256">Endoplasmic reticulum</keyword>
<keyword id="KW-0325">Glycoprotein</keyword>
<keyword id="KW-0444">Lipid biosynthesis</keyword>
<keyword id="KW-0443">Lipid metabolism</keyword>
<keyword id="KW-0472">Membrane</keyword>
<keyword id="KW-0521">NADP</keyword>
<keyword id="KW-0560">Oxidoreductase</keyword>
<keyword id="KW-1185">Reference proteome</keyword>
<keyword id="KW-0752">Steroid biosynthesis</keyword>
<keyword id="KW-0753">Steroid metabolism</keyword>
<keyword id="KW-0756">Sterol biosynthesis</keyword>
<keyword id="KW-1207">Sterol metabolism</keyword>
<keyword id="KW-0812">Transmembrane</keyword>
<keyword id="KW-1133">Transmembrane helix</keyword>
<evidence type="ECO:0000250" key="1">
    <source>
        <dbReference type="UniProtKB" id="G4SW86"/>
    </source>
</evidence>
<evidence type="ECO:0000255" key="2"/>
<evidence type="ECO:0000255" key="3">
    <source>
        <dbReference type="PROSITE-ProRule" id="PRU00498"/>
    </source>
</evidence>
<evidence type="ECO:0000269" key="4">
    <source>
    </source>
</evidence>
<evidence type="ECO:0000303" key="5">
    <source>
    </source>
</evidence>
<evidence type="ECO:0000305" key="6"/>
<evidence type="ECO:0000305" key="7">
    <source>
    </source>
</evidence>
<evidence type="ECO:0000305" key="8">
    <source>
    </source>
</evidence>
<proteinExistence type="evidence at protein level"/>
<feature type="chain" id="PRO_0000454123" description="Delta(14)-sterol reductase erg24B">
    <location>
        <begin position="1"/>
        <end position="518"/>
    </location>
</feature>
<feature type="transmembrane region" description="Helical" evidence="2">
    <location>
        <begin position="110"/>
        <end position="130"/>
    </location>
</feature>
<feature type="transmembrane region" description="Helical" evidence="2">
    <location>
        <begin position="150"/>
        <end position="170"/>
    </location>
</feature>
<feature type="transmembrane region" description="Helical" evidence="2">
    <location>
        <begin position="182"/>
        <end position="202"/>
    </location>
</feature>
<feature type="transmembrane region" description="Helical" evidence="2">
    <location>
        <begin position="294"/>
        <end position="314"/>
    </location>
</feature>
<feature type="transmembrane region" description="Helical" evidence="2">
    <location>
        <begin position="321"/>
        <end position="341"/>
    </location>
</feature>
<feature type="transmembrane region" description="Helical" evidence="2">
    <location>
        <begin position="355"/>
        <end position="375"/>
    </location>
</feature>
<feature type="transmembrane region" description="Helical" evidence="2">
    <location>
        <begin position="464"/>
        <end position="484"/>
    </location>
</feature>
<feature type="binding site" evidence="1">
    <location>
        <position position="382"/>
    </location>
    <ligand>
        <name>NADP(+)</name>
        <dbReference type="ChEBI" id="CHEBI:58349"/>
    </ligand>
</feature>
<feature type="binding site" evidence="1">
    <location>
        <position position="386"/>
    </location>
    <ligand>
        <name>NADP(+)</name>
        <dbReference type="ChEBI" id="CHEBI:58349"/>
    </ligand>
</feature>
<feature type="binding site" evidence="1">
    <location>
        <position position="409"/>
    </location>
    <ligand>
        <name>NADP(+)</name>
        <dbReference type="ChEBI" id="CHEBI:58349"/>
    </ligand>
</feature>
<feature type="binding site" evidence="1">
    <location>
        <position position="414"/>
    </location>
    <ligand>
        <name>NADP(+)</name>
        <dbReference type="ChEBI" id="CHEBI:58349"/>
    </ligand>
</feature>
<feature type="binding site" evidence="1">
    <location>
        <begin position="421"/>
        <end position="422"/>
    </location>
    <ligand>
        <name>NADP(+)</name>
        <dbReference type="ChEBI" id="CHEBI:58349"/>
    </ligand>
</feature>
<feature type="binding site" evidence="1">
    <location>
        <position position="490"/>
    </location>
    <ligand>
        <name>NADP(+)</name>
        <dbReference type="ChEBI" id="CHEBI:58349"/>
    </ligand>
</feature>
<feature type="binding site" evidence="1">
    <location>
        <begin position="494"/>
        <end position="498"/>
    </location>
    <ligand>
        <name>NADP(+)</name>
        <dbReference type="ChEBI" id="CHEBI:58349"/>
    </ligand>
</feature>
<feature type="binding site" evidence="1">
    <location>
        <position position="505"/>
    </location>
    <ligand>
        <name>NADP(+)</name>
        <dbReference type="ChEBI" id="CHEBI:58349"/>
    </ligand>
</feature>
<feature type="glycosylation site" description="N-linked (GlcNAc...) asparagine" evidence="3">
    <location>
        <position position="36"/>
    </location>
</feature>
<name>ER24B_ASPFU</name>
<comment type="function">
    <text evidence="4 7 8">Delta(14)-sterol reductase; part of the third module of ergosterol biosynthesis pathway that includes the late steps of the pathway (PubMed:33475797). Catalyzes the reduction of the C14=C15 double bond within 4,4,24-trimethyl ergosta-8,14,24(28)-trienolto produce 4,4-dimethylfecosterol (PubMed:33475797). The third module or late pathway involves the ergosterol synthesis itself through consecutive reactions that mainly occur in the endoplasmic reticulum (ER) membrane. Firstly, the squalene synthase erg9 catalyzes the condensation of 2 farnesyl pyrophosphate moieties to form squalene, which is the precursor of all steroids. Squalene synthase is crucial for balancing the incorporation of farnesyl diphosphate (FPP) into sterol and nonsterol isoprene synthesis. Secondly, squalene is converted into lanosterol by the consecutive action of the squalene epoxidase erg1 and the lanosterol synthase erg7. Then, the delta(24)-sterol C-methyltransferase erg6 methylates lanosterol at C-24 to produce eburicol. Eburicol is the substrate of the sterol 14-alpha demethylase encoded by cyp51A and cyp51B, to yield 4,4,24-trimethyl ergosta-8,14,24(28)-trienol. The C-14 reductase erg24 then reduces the C14=C15 double bond which leads to 4,4-dimethylfecosterol. A sequence of further demethylations at C-4, involving the C-4 demethylation complex containing the C-4 methylsterol oxidases erg25A or erg25B, the sterol-4-alpha-carboxylate 3-dehydrogenase erg26 and the 3-keto-steroid reductase erg27, leads to the production of fecosterol via 4-methylfecosterol. The C-8 sterol isomerase erg2 then catalyzes the reaction which results in unsaturation at C-7 in the B ring of sterols and thus converts fecosterol to episterol. The sterol-C5-desaturase erg3B then catalyzes the introduction of a C-5 double bond in the B ring to produce 5-dehydroepisterol. The 2 other sterol-C5-desaturases, erg3A and erg3C, seem to be less important in ergosterol biosynthesis. The C-22 sterol desaturase erg5 further converts 5-dehydroepisterol into ergosta-5,7,22,24(28)-tetraen-3beta-ol by forming the C-22(23) double bond in the sterol side chain. Finally, ergosta-5,7,22,24(28)-tetraen-3beta-ol is substrate of the C-24(28) sterol reductases erg4A and erg4B to produce ergosterol. Possible alternative sterol biosynthetic pathways might exist from fecosterol to ergosterol, depending on the activities of the erg3 isoforms (Probable) (PubMed:16110826, PubMed:18191972).</text>
</comment>
<comment type="pathway">
    <text evidence="7">Steroid metabolism; ergosterol biosynthesis.</text>
</comment>
<comment type="subcellular location">
    <subcellularLocation>
        <location evidence="4">Endoplasmic reticulum membrane</location>
        <topology evidence="2">Multi-pass membrane protein</topology>
    </subcellularLocation>
</comment>
<comment type="disruption phenotype">
    <text evidence="4">Results in decreased hyphal growth and virulence; as well as to hypersensitivity to azole drugs (PubMed:33475797). Deletion of both erg24A and erg24B affects ergosterol biosynthesis and leads to the accumulation of the intermediate 4,4-dimethylcholesta-8,12,24-trienol (PubMed:33475797).</text>
</comment>
<comment type="miscellaneous">
    <text evidence="8">In Aspergillus, the biosynthesis pathway of the sterol precursors leading to the prevalent sterol ergosterol differs from yeast. The ring system of lanosterol in S.cerevisiae is firstly demethylised in three enzymatic steps leading to the intermediate zymosterol and secondly a methyl group is added to zymosterol by the sterol 24-C-methyltransferase to form fecosterol. In Aspergillus, lanosterol is firstly transmethylated by the sterol 24-C-methyltransferase leading to the intermediate eburicol and secondly demethylated in three steps to form fecosterol.</text>
</comment>
<comment type="similarity">
    <text evidence="6">Belongs to the ERG4/ERG24 family.</text>
</comment>